<feature type="chain" id="PRO_0000339555" description="ATP synthase subunit beta 2">
    <location>
        <begin position="1"/>
        <end position="485"/>
    </location>
</feature>
<feature type="region of interest" description="Disordered" evidence="2">
    <location>
        <begin position="1"/>
        <end position="27"/>
    </location>
</feature>
<feature type="compositionally biased region" description="Basic and acidic residues" evidence="2">
    <location>
        <begin position="1"/>
        <end position="10"/>
    </location>
</feature>
<feature type="compositionally biased region" description="Polar residues" evidence="2">
    <location>
        <begin position="11"/>
        <end position="24"/>
    </location>
</feature>
<feature type="binding site" evidence="1">
    <location>
        <begin position="177"/>
        <end position="184"/>
    </location>
    <ligand>
        <name>ATP</name>
        <dbReference type="ChEBI" id="CHEBI:30616"/>
    </ligand>
</feature>
<evidence type="ECO:0000255" key="1">
    <source>
        <dbReference type="HAMAP-Rule" id="MF_01347"/>
    </source>
</evidence>
<evidence type="ECO:0000256" key="2">
    <source>
        <dbReference type="SAM" id="MobiDB-lite"/>
    </source>
</evidence>
<name>ATPB2_NITEC</name>
<gene>
    <name evidence="1" type="primary">atpD2</name>
    <name type="ordered locus">Neut_2013</name>
</gene>
<sequence length="485" mass="52242">MSGMGEKSEQISKSARSTDPQEQESVALASQCVGEGRVLKIRGGVVDVFFTEHIPRIHDLVYAGDLAMEVAALLDQGTVRCIALTPVRGLGLGMPVHATGAPIQVPVGEAVLGRMLNVFGEPIDGKPAPNATISRSIHQAPPVLEERVVHSTILETGIKAIDLLSPIERGGKTGLFGGAGVGKTVLITELINNTAQHHKGVSLFCGIGERSREAEELYREMGEAGVRDKTVMLFGQMSEAPGVRFLVGKTALTMAEYFRDDLGQDVLLLIDNVFRFVQAGSEVSGLLGRMPSRVGYQPTLATELASLQERITSTRKGAITSIQAVYVPADDFTDPAAAHIFSHLSASVVLSRKRASEGLYPAVDPLASTSVMLTPAVVGQRHYDIARAVRRTLAEYEELRDIIAMLGLEELSAADRTVVARARRLERFLTQPFFSAESFSGEIGARVSVAETLAGCERILQQTKFADDEIDYYMIGALPEQKTAV</sequence>
<protein>
    <recommendedName>
        <fullName evidence="1">ATP synthase subunit beta 2</fullName>
        <ecNumber evidence="1">7.1.2.2</ecNumber>
    </recommendedName>
    <alternativeName>
        <fullName evidence="1">ATP synthase F1 sector subunit beta 2</fullName>
    </alternativeName>
    <alternativeName>
        <fullName evidence="1">F-ATPase subunit beta 2</fullName>
    </alternativeName>
</protein>
<organism>
    <name type="scientific">Nitrosomonas eutropha (strain DSM 101675 / C91 / Nm57)</name>
    <dbReference type="NCBI Taxonomy" id="335283"/>
    <lineage>
        <taxon>Bacteria</taxon>
        <taxon>Pseudomonadati</taxon>
        <taxon>Pseudomonadota</taxon>
        <taxon>Betaproteobacteria</taxon>
        <taxon>Nitrosomonadales</taxon>
        <taxon>Nitrosomonadaceae</taxon>
        <taxon>Nitrosomonas</taxon>
    </lineage>
</organism>
<reference key="1">
    <citation type="journal article" date="2007" name="Environ. Microbiol.">
        <title>Whole-genome analysis of the ammonia-oxidizing bacterium, Nitrosomonas eutropha C91: implications for niche adaptation.</title>
        <authorList>
            <person name="Stein L.Y."/>
            <person name="Arp D.J."/>
            <person name="Berube P.M."/>
            <person name="Chain P.S."/>
            <person name="Hauser L."/>
            <person name="Jetten M.S."/>
            <person name="Klotz M.G."/>
            <person name="Larimer F.W."/>
            <person name="Norton J.M."/>
            <person name="Op den Camp H.J.M."/>
            <person name="Shin M."/>
            <person name="Wei X."/>
        </authorList>
    </citation>
    <scope>NUCLEOTIDE SEQUENCE [LARGE SCALE GENOMIC DNA]</scope>
    <source>
        <strain>DSM 101675 / C91 / Nm57</strain>
    </source>
</reference>
<accession>Q0AEJ6</accession>
<dbReference type="EC" id="7.1.2.2" evidence="1"/>
<dbReference type="EMBL" id="CP000450">
    <property type="protein sequence ID" value="ABI60236.1"/>
    <property type="molecule type" value="Genomic_DNA"/>
</dbReference>
<dbReference type="SMR" id="Q0AEJ6"/>
<dbReference type="STRING" id="335283.Neut_2013"/>
<dbReference type="KEGG" id="net:Neut_2013"/>
<dbReference type="eggNOG" id="COG0055">
    <property type="taxonomic scope" value="Bacteria"/>
</dbReference>
<dbReference type="HOGENOM" id="CLU_022398_0_2_4"/>
<dbReference type="OrthoDB" id="9801639at2"/>
<dbReference type="Proteomes" id="UP000001966">
    <property type="component" value="Chromosome"/>
</dbReference>
<dbReference type="GO" id="GO:0005886">
    <property type="term" value="C:plasma membrane"/>
    <property type="evidence" value="ECO:0007669"/>
    <property type="project" value="UniProtKB-SubCell"/>
</dbReference>
<dbReference type="GO" id="GO:0045259">
    <property type="term" value="C:proton-transporting ATP synthase complex"/>
    <property type="evidence" value="ECO:0007669"/>
    <property type="project" value="UniProtKB-KW"/>
</dbReference>
<dbReference type="GO" id="GO:0005524">
    <property type="term" value="F:ATP binding"/>
    <property type="evidence" value="ECO:0007669"/>
    <property type="project" value="UniProtKB-UniRule"/>
</dbReference>
<dbReference type="GO" id="GO:0016887">
    <property type="term" value="F:ATP hydrolysis activity"/>
    <property type="evidence" value="ECO:0007669"/>
    <property type="project" value="InterPro"/>
</dbReference>
<dbReference type="GO" id="GO:0046933">
    <property type="term" value="F:proton-transporting ATP synthase activity, rotational mechanism"/>
    <property type="evidence" value="ECO:0007669"/>
    <property type="project" value="UniProtKB-UniRule"/>
</dbReference>
<dbReference type="CDD" id="cd18110">
    <property type="entry name" value="ATP-synt_F1_beta_C"/>
    <property type="match status" value="1"/>
</dbReference>
<dbReference type="CDD" id="cd18115">
    <property type="entry name" value="ATP-synt_F1_beta_N"/>
    <property type="match status" value="1"/>
</dbReference>
<dbReference type="CDD" id="cd01133">
    <property type="entry name" value="F1-ATPase_beta_CD"/>
    <property type="match status" value="1"/>
</dbReference>
<dbReference type="FunFam" id="3.40.50.300:FF:001630">
    <property type="entry name" value="ATP synthase subunit beta"/>
    <property type="match status" value="1"/>
</dbReference>
<dbReference type="Gene3D" id="2.40.10.170">
    <property type="match status" value="1"/>
</dbReference>
<dbReference type="Gene3D" id="1.10.1140.10">
    <property type="entry name" value="Bovine Mitochondrial F1-atpase, Atp Synthase Beta Chain, Chain D, domain 3"/>
    <property type="match status" value="1"/>
</dbReference>
<dbReference type="Gene3D" id="3.40.50.300">
    <property type="entry name" value="P-loop containing nucleotide triphosphate hydrolases"/>
    <property type="match status" value="1"/>
</dbReference>
<dbReference type="HAMAP" id="MF_01347">
    <property type="entry name" value="ATP_synth_beta_bact"/>
    <property type="match status" value="1"/>
</dbReference>
<dbReference type="InterPro" id="IPR003593">
    <property type="entry name" value="AAA+_ATPase"/>
</dbReference>
<dbReference type="InterPro" id="IPR055190">
    <property type="entry name" value="ATP-synt_VA_C"/>
</dbReference>
<dbReference type="InterPro" id="IPR005722">
    <property type="entry name" value="ATP_synth_F1_bsu"/>
</dbReference>
<dbReference type="InterPro" id="IPR020003">
    <property type="entry name" value="ATPase_a/bsu_AS"/>
</dbReference>
<dbReference type="InterPro" id="IPR050053">
    <property type="entry name" value="ATPase_alpha/beta_chains"/>
</dbReference>
<dbReference type="InterPro" id="IPR004100">
    <property type="entry name" value="ATPase_F1/V1/A1_a/bsu_N"/>
</dbReference>
<dbReference type="InterPro" id="IPR036121">
    <property type="entry name" value="ATPase_F1/V1/A1_a/bsu_N_sf"/>
</dbReference>
<dbReference type="InterPro" id="IPR000194">
    <property type="entry name" value="ATPase_F1/V1/A1_a/bsu_nucl-bd"/>
</dbReference>
<dbReference type="InterPro" id="IPR024034">
    <property type="entry name" value="ATPase_F1/V1_b/a_C"/>
</dbReference>
<dbReference type="InterPro" id="IPR027417">
    <property type="entry name" value="P-loop_NTPase"/>
</dbReference>
<dbReference type="NCBIfam" id="TIGR01039">
    <property type="entry name" value="atpD"/>
    <property type="match status" value="1"/>
</dbReference>
<dbReference type="PANTHER" id="PTHR15184">
    <property type="entry name" value="ATP SYNTHASE"/>
    <property type="match status" value="1"/>
</dbReference>
<dbReference type="PANTHER" id="PTHR15184:SF71">
    <property type="entry name" value="ATP SYNTHASE SUBUNIT BETA, MITOCHONDRIAL"/>
    <property type="match status" value="1"/>
</dbReference>
<dbReference type="Pfam" id="PF00006">
    <property type="entry name" value="ATP-synt_ab"/>
    <property type="match status" value="1"/>
</dbReference>
<dbReference type="Pfam" id="PF02874">
    <property type="entry name" value="ATP-synt_ab_N"/>
    <property type="match status" value="1"/>
</dbReference>
<dbReference type="Pfam" id="PF22919">
    <property type="entry name" value="ATP-synt_VA_C"/>
    <property type="match status" value="1"/>
</dbReference>
<dbReference type="SMART" id="SM00382">
    <property type="entry name" value="AAA"/>
    <property type="match status" value="1"/>
</dbReference>
<dbReference type="SUPFAM" id="SSF47917">
    <property type="entry name" value="C-terminal domain of alpha and beta subunits of F1 ATP synthase"/>
    <property type="match status" value="1"/>
</dbReference>
<dbReference type="SUPFAM" id="SSF50615">
    <property type="entry name" value="N-terminal domain of alpha and beta subunits of F1 ATP synthase"/>
    <property type="match status" value="1"/>
</dbReference>
<dbReference type="SUPFAM" id="SSF52540">
    <property type="entry name" value="P-loop containing nucleoside triphosphate hydrolases"/>
    <property type="match status" value="1"/>
</dbReference>
<dbReference type="PROSITE" id="PS00152">
    <property type="entry name" value="ATPASE_ALPHA_BETA"/>
    <property type="match status" value="1"/>
</dbReference>
<comment type="function">
    <text evidence="1">Produces ATP from ADP in the presence of a proton gradient across the membrane. The catalytic sites are hosted primarily by the beta subunits.</text>
</comment>
<comment type="catalytic activity">
    <reaction evidence="1">
        <text>ATP + H2O + 4 H(+)(in) = ADP + phosphate + 5 H(+)(out)</text>
        <dbReference type="Rhea" id="RHEA:57720"/>
        <dbReference type="ChEBI" id="CHEBI:15377"/>
        <dbReference type="ChEBI" id="CHEBI:15378"/>
        <dbReference type="ChEBI" id="CHEBI:30616"/>
        <dbReference type="ChEBI" id="CHEBI:43474"/>
        <dbReference type="ChEBI" id="CHEBI:456216"/>
        <dbReference type="EC" id="7.1.2.2"/>
    </reaction>
</comment>
<comment type="subunit">
    <text evidence="1">F-type ATPases have 2 components, CF(1) - the catalytic core - and CF(0) - the membrane proton channel. CF(1) has five subunits: alpha(3), beta(3), gamma(1), delta(1), epsilon(1). CF(0) has three main subunits: a(1), b(2) and c(9-12). The alpha and beta chains form an alternating ring which encloses part of the gamma chain. CF(1) is attached to CF(0) by a central stalk formed by the gamma and epsilon chains, while a peripheral stalk is formed by the delta and b chains.</text>
</comment>
<comment type="subcellular location">
    <subcellularLocation>
        <location evidence="1">Cell inner membrane</location>
        <topology evidence="1">Peripheral membrane protein</topology>
    </subcellularLocation>
</comment>
<comment type="similarity">
    <text evidence="1">Belongs to the ATPase alpha/beta chains family.</text>
</comment>
<proteinExistence type="inferred from homology"/>
<keyword id="KW-0066">ATP synthesis</keyword>
<keyword id="KW-0067">ATP-binding</keyword>
<keyword id="KW-0997">Cell inner membrane</keyword>
<keyword id="KW-1003">Cell membrane</keyword>
<keyword id="KW-0139">CF(1)</keyword>
<keyword id="KW-0375">Hydrogen ion transport</keyword>
<keyword id="KW-0406">Ion transport</keyword>
<keyword id="KW-0472">Membrane</keyword>
<keyword id="KW-0547">Nucleotide-binding</keyword>
<keyword id="KW-1278">Translocase</keyword>
<keyword id="KW-0813">Transport</keyword>